<sequence>MKKIMITGALGQIGTELVVKCREIYGTDNVLATDIREPEADSPVQNGPFEILDVTDRDRMFELVRDFEADSLMHMAALLSATAEKNPILAWDLNMGGLMNALEATRTYNLHFFTPSSIGAFGDSTPKVNTPQVTIQQPTTMYGVNKVAGELLCQYYFKRFGVDTRSVRFPGLISHVKEPGGGTTDYAVEIYFKAVREGHYTSFIDKGTYMDMMYMDDAIEAIIKLMEADDAKLETRNGYNLSAMSFDPEMVKEAIQEYYPNFTLDYDVDPIRQGIANSWPDSIDTNCSRGEWGFDPKYDLASMTKLMLEAIEQKDTVKNNN</sequence>
<dbReference type="EMBL" id="AJ938182">
    <property type="protein sequence ID" value="CAI80192.1"/>
    <property type="molecule type" value="Genomic_DNA"/>
</dbReference>
<dbReference type="RefSeq" id="WP_000723305.1">
    <property type="nucleotide sequence ID" value="NC_007622.1"/>
</dbReference>
<dbReference type="SMR" id="Q2YSA8"/>
<dbReference type="KEGG" id="sab:SAB0504"/>
<dbReference type="HOGENOM" id="CLU_007383_19_1_9"/>
<dbReference type="GO" id="GO:0008743">
    <property type="term" value="F:L-threonine 3-dehydrogenase activity"/>
    <property type="evidence" value="ECO:0007669"/>
    <property type="project" value="TreeGrafter"/>
</dbReference>
<dbReference type="GO" id="GO:0006567">
    <property type="term" value="P:threonine catabolic process"/>
    <property type="evidence" value="ECO:0007669"/>
    <property type="project" value="TreeGrafter"/>
</dbReference>
<dbReference type="FunFam" id="3.40.50.720:FF:000077">
    <property type="entry name" value="L-threonine 3-dehydrogenase, mitochondrial"/>
    <property type="match status" value="1"/>
</dbReference>
<dbReference type="Gene3D" id="3.40.50.720">
    <property type="entry name" value="NAD(P)-binding Rossmann-like Domain"/>
    <property type="match status" value="1"/>
</dbReference>
<dbReference type="InterPro" id="IPR001509">
    <property type="entry name" value="Epimerase_deHydtase"/>
</dbReference>
<dbReference type="InterPro" id="IPR036291">
    <property type="entry name" value="NAD(P)-bd_dom_sf"/>
</dbReference>
<dbReference type="InterPro" id="IPR051225">
    <property type="entry name" value="NAD(P)_epim/dehydratase"/>
</dbReference>
<dbReference type="PANTHER" id="PTHR42687">
    <property type="entry name" value="L-THREONINE 3-DEHYDROGENASE"/>
    <property type="match status" value="1"/>
</dbReference>
<dbReference type="PANTHER" id="PTHR42687:SF1">
    <property type="entry name" value="L-THREONINE 3-DEHYDROGENASE, MITOCHONDRIAL"/>
    <property type="match status" value="1"/>
</dbReference>
<dbReference type="Pfam" id="PF01370">
    <property type="entry name" value="Epimerase"/>
    <property type="match status" value="1"/>
</dbReference>
<dbReference type="SUPFAM" id="SSF51735">
    <property type="entry name" value="NAD(P)-binding Rossmann-fold domains"/>
    <property type="match status" value="1"/>
</dbReference>
<accession>Q2YSA8</accession>
<reference key="1">
    <citation type="journal article" date="2007" name="PLoS ONE">
        <title>Molecular correlates of host specialization in Staphylococcus aureus.</title>
        <authorList>
            <person name="Herron-Olson L."/>
            <person name="Fitzgerald J.R."/>
            <person name="Musser J.M."/>
            <person name="Kapur V."/>
        </authorList>
    </citation>
    <scope>NUCLEOTIDE SEQUENCE [LARGE SCALE GENOMIC DNA]</scope>
    <source>
        <strain>bovine RF122 / ET3-1</strain>
    </source>
</reference>
<feature type="chain" id="PRO_0000270844" description="Uncharacterized epimerase/dehydratase SAB0504">
    <location>
        <begin position="1"/>
        <end position="321"/>
    </location>
</feature>
<organism>
    <name type="scientific">Staphylococcus aureus (strain bovine RF122 / ET3-1)</name>
    <dbReference type="NCBI Taxonomy" id="273036"/>
    <lineage>
        <taxon>Bacteria</taxon>
        <taxon>Bacillati</taxon>
        <taxon>Bacillota</taxon>
        <taxon>Bacilli</taxon>
        <taxon>Bacillales</taxon>
        <taxon>Staphylococcaceae</taxon>
        <taxon>Staphylococcus</taxon>
    </lineage>
</organism>
<comment type="similarity">
    <text evidence="1">Belongs to the NAD(P)-dependent epimerase/dehydratase family.</text>
</comment>
<proteinExistence type="inferred from homology"/>
<evidence type="ECO:0000305" key="1"/>
<name>Y504_STAAB</name>
<protein>
    <recommendedName>
        <fullName>Uncharacterized epimerase/dehydratase SAB0504</fullName>
    </recommendedName>
</protein>
<gene>
    <name type="ordered locus">SAB0504</name>
</gene>